<name>ERPA_SHIF8</name>
<protein>
    <recommendedName>
        <fullName evidence="1">Iron-sulfur cluster insertion protein ErpA</fullName>
    </recommendedName>
</protein>
<keyword id="KW-0408">Iron</keyword>
<keyword id="KW-0411">Iron-sulfur</keyword>
<keyword id="KW-0479">Metal-binding</keyword>
<gene>
    <name evidence="1" type="primary">erpA</name>
    <name type="ordered locus">SFV_0141</name>
</gene>
<feature type="chain" id="PRO_0000311561" description="Iron-sulfur cluster insertion protein ErpA">
    <location>
        <begin position="1"/>
        <end position="114"/>
    </location>
</feature>
<feature type="binding site" evidence="1">
    <location>
        <position position="42"/>
    </location>
    <ligand>
        <name>iron-sulfur cluster</name>
        <dbReference type="ChEBI" id="CHEBI:30408"/>
    </ligand>
</feature>
<feature type="binding site" evidence="1">
    <location>
        <position position="106"/>
    </location>
    <ligand>
        <name>iron-sulfur cluster</name>
        <dbReference type="ChEBI" id="CHEBI:30408"/>
    </ligand>
</feature>
<feature type="binding site" evidence="1">
    <location>
        <position position="108"/>
    </location>
    <ligand>
        <name>iron-sulfur cluster</name>
        <dbReference type="ChEBI" id="CHEBI:30408"/>
    </ligand>
</feature>
<comment type="function">
    <text evidence="1">Required for insertion of 4Fe-4S clusters for at least IspG.</text>
</comment>
<comment type="cofactor">
    <cofactor evidence="1">
        <name>iron-sulfur cluster</name>
        <dbReference type="ChEBI" id="CHEBI:30408"/>
    </cofactor>
    <text evidence="1">Binds 1 iron-sulfur cluster per subunit.</text>
</comment>
<comment type="subunit">
    <text evidence="1">Homodimer.</text>
</comment>
<comment type="similarity">
    <text evidence="1">Belongs to the HesB/IscA family.</text>
</comment>
<proteinExistence type="inferred from homology"/>
<sequence>MSDDVALPLEFTDAAANKVKSLIADEDNPNLKLRVYITGGGCSGFQYGFTFDDQVNEGDMTIEKQGVGLVVDPMSLQYLVGGSVDYTEGLEGSRFIVTNPNAKSTCGCGSSFSI</sequence>
<dbReference type="EMBL" id="CP000266">
    <property type="protein sequence ID" value="ABF02426.1"/>
    <property type="molecule type" value="Genomic_DNA"/>
</dbReference>
<dbReference type="RefSeq" id="WP_001295564.1">
    <property type="nucleotide sequence ID" value="NC_008258.1"/>
</dbReference>
<dbReference type="SMR" id="Q0T850"/>
<dbReference type="GeneID" id="93777270"/>
<dbReference type="KEGG" id="sfv:SFV_0141"/>
<dbReference type="HOGENOM" id="CLU_069054_5_3_6"/>
<dbReference type="Proteomes" id="UP000000659">
    <property type="component" value="Chromosome"/>
</dbReference>
<dbReference type="GO" id="GO:0005829">
    <property type="term" value="C:cytosol"/>
    <property type="evidence" value="ECO:0007669"/>
    <property type="project" value="TreeGrafter"/>
</dbReference>
<dbReference type="GO" id="GO:0051537">
    <property type="term" value="F:2 iron, 2 sulfur cluster binding"/>
    <property type="evidence" value="ECO:0007669"/>
    <property type="project" value="TreeGrafter"/>
</dbReference>
<dbReference type="GO" id="GO:0051539">
    <property type="term" value="F:4 iron, 4 sulfur cluster binding"/>
    <property type="evidence" value="ECO:0007669"/>
    <property type="project" value="TreeGrafter"/>
</dbReference>
<dbReference type="GO" id="GO:0005506">
    <property type="term" value="F:iron ion binding"/>
    <property type="evidence" value="ECO:0007669"/>
    <property type="project" value="UniProtKB-UniRule"/>
</dbReference>
<dbReference type="GO" id="GO:0016226">
    <property type="term" value="P:iron-sulfur cluster assembly"/>
    <property type="evidence" value="ECO:0007669"/>
    <property type="project" value="UniProtKB-UniRule"/>
</dbReference>
<dbReference type="FunFam" id="2.60.300.12:FF:000002">
    <property type="entry name" value="Iron-sulfur cluster insertion protein ErpA"/>
    <property type="match status" value="1"/>
</dbReference>
<dbReference type="Gene3D" id="2.60.300.12">
    <property type="entry name" value="HesB-like domain"/>
    <property type="match status" value="1"/>
</dbReference>
<dbReference type="HAMAP" id="MF_01380">
    <property type="entry name" value="Fe_S_insert_ErpA"/>
    <property type="match status" value="1"/>
</dbReference>
<dbReference type="InterPro" id="IPR000361">
    <property type="entry name" value="FeS_biogenesis"/>
</dbReference>
<dbReference type="InterPro" id="IPR016092">
    <property type="entry name" value="FeS_cluster_insertion"/>
</dbReference>
<dbReference type="InterPro" id="IPR017870">
    <property type="entry name" value="FeS_cluster_insertion_CS"/>
</dbReference>
<dbReference type="InterPro" id="IPR023063">
    <property type="entry name" value="FeS_cluster_insertion_RrpA"/>
</dbReference>
<dbReference type="InterPro" id="IPR035903">
    <property type="entry name" value="HesB-like_dom_sf"/>
</dbReference>
<dbReference type="NCBIfam" id="TIGR00049">
    <property type="entry name" value="iron-sulfur cluster assembly accessory protein"/>
    <property type="match status" value="1"/>
</dbReference>
<dbReference type="NCBIfam" id="NF010147">
    <property type="entry name" value="PRK13623.1"/>
    <property type="match status" value="1"/>
</dbReference>
<dbReference type="PANTHER" id="PTHR43011">
    <property type="entry name" value="IRON-SULFUR CLUSTER ASSEMBLY 2 HOMOLOG, MITOCHONDRIAL"/>
    <property type="match status" value="1"/>
</dbReference>
<dbReference type="PANTHER" id="PTHR43011:SF1">
    <property type="entry name" value="IRON-SULFUR CLUSTER ASSEMBLY 2 HOMOLOG, MITOCHONDRIAL"/>
    <property type="match status" value="1"/>
</dbReference>
<dbReference type="Pfam" id="PF01521">
    <property type="entry name" value="Fe-S_biosyn"/>
    <property type="match status" value="1"/>
</dbReference>
<dbReference type="SUPFAM" id="SSF89360">
    <property type="entry name" value="HesB-like domain"/>
    <property type="match status" value="1"/>
</dbReference>
<dbReference type="PROSITE" id="PS01152">
    <property type="entry name" value="HESB"/>
    <property type="match status" value="1"/>
</dbReference>
<reference key="1">
    <citation type="journal article" date="2006" name="BMC Genomics">
        <title>Complete genome sequence of Shigella flexneri 5b and comparison with Shigella flexneri 2a.</title>
        <authorList>
            <person name="Nie H."/>
            <person name="Yang F."/>
            <person name="Zhang X."/>
            <person name="Yang J."/>
            <person name="Chen L."/>
            <person name="Wang J."/>
            <person name="Xiong Z."/>
            <person name="Peng J."/>
            <person name="Sun L."/>
            <person name="Dong J."/>
            <person name="Xue Y."/>
            <person name="Xu X."/>
            <person name="Chen S."/>
            <person name="Yao Z."/>
            <person name="Shen Y."/>
            <person name="Jin Q."/>
        </authorList>
    </citation>
    <scope>NUCLEOTIDE SEQUENCE [LARGE SCALE GENOMIC DNA]</scope>
    <source>
        <strain>8401</strain>
    </source>
</reference>
<evidence type="ECO:0000255" key="1">
    <source>
        <dbReference type="HAMAP-Rule" id="MF_01380"/>
    </source>
</evidence>
<accession>Q0T850</accession>
<organism>
    <name type="scientific">Shigella flexneri serotype 5b (strain 8401)</name>
    <dbReference type="NCBI Taxonomy" id="373384"/>
    <lineage>
        <taxon>Bacteria</taxon>
        <taxon>Pseudomonadati</taxon>
        <taxon>Pseudomonadota</taxon>
        <taxon>Gammaproteobacteria</taxon>
        <taxon>Enterobacterales</taxon>
        <taxon>Enterobacteriaceae</taxon>
        <taxon>Shigella</taxon>
    </lineage>
</organism>